<gene>
    <name type="primary">tmem218</name>
</gene>
<keyword id="KW-0966">Cell projection</keyword>
<keyword id="KW-0472">Membrane</keyword>
<keyword id="KW-1185">Reference proteome</keyword>
<keyword id="KW-0812">Transmembrane</keyword>
<keyword id="KW-1133">Transmembrane helix</keyword>
<proteinExistence type="inferred from homology"/>
<evidence type="ECO:0000250" key="1">
    <source>
        <dbReference type="UniProtKB" id="Q9CQ44"/>
    </source>
</evidence>
<evidence type="ECO:0000255" key="2"/>
<evidence type="ECO:0000305" key="3"/>
<organism>
    <name type="scientific">Xenopus tropicalis</name>
    <name type="common">Western clawed frog</name>
    <name type="synonym">Silurana tropicalis</name>
    <dbReference type="NCBI Taxonomy" id="8364"/>
    <lineage>
        <taxon>Eukaryota</taxon>
        <taxon>Metazoa</taxon>
        <taxon>Chordata</taxon>
        <taxon>Craniata</taxon>
        <taxon>Vertebrata</taxon>
        <taxon>Euteleostomi</taxon>
        <taxon>Amphibia</taxon>
        <taxon>Batrachia</taxon>
        <taxon>Anura</taxon>
        <taxon>Pipoidea</taxon>
        <taxon>Pipidae</taxon>
        <taxon>Xenopodinae</taxon>
        <taxon>Xenopus</taxon>
        <taxon>Silurana</taxon>
    </lineage>
</organism>
<name>TM218_XENTR</name>
<sequence>MATTILGVGPGVFIIAVIWMVTLMLTVLLCRASGKARFWTVVVFTLALITTLILVFFPRASQTPAPAKEMQIVDTFFIGRYFLISIMSVIFLGCLFFVFVYHILEPVYAKPIGIH</sequence>
<dbReference type="EMBL" id="BC158955">
    <property type="protein sequence ID" value="AAI58956.1"/>
    <property type="molecule type" value="mRNA"/>
</dbReference>
<dbReference type="RefSeq" id="NP_001016711.1">
    <property type="nucleotide sequence ID" value="NM_001016711.3"/>
</dbReference>
<dbReference type="RefSeq" id="XP_012822072.1">
    <property type="nucleotide sequence ID" value="XM_012966618.3"/>
</dbReference>
<dbReference type="RefSeq" id="XP_012822074.1">
    <property type="nucleotide sequence ID" value="XM_012966620.3"/>
</dbReference>
<dbReference type="SMR" id="B0JYX6"/>
<dbReference type="FunCoup" id="B0JYX6">
    <property type="interactions" value="160"/>
</dbReference>
<dbReference type="PaxDb" id="8364-ENSXETP00000017280"/>
<dbReference type="GeneID" id="549465"/>
<dbReference type="KEGG" id="xtr:549465"/>
<dbReference type="AGR" id="Xenbase:XB-GENE-955389"/>
<dbReference type="CTD" id="219854"/>
<dbReference type="Xenbase" id="XB-GENE-955389">
    <property type="gene designation" value="tmem218"/>
</dbReference>
<dbReference type="eggNOG" id="ENOG502S2I1">
    <property type="taxonomic scope" value="Eukaryota"/>
</dbReference>
<dbReference type="HOGENOM" id="CLU_169774_0_0_1"/>
<dbReference type="InParanoid" id="B0JYX6"/>
<dbReference type="OMA" id="PATEMKI"/>
<dbReference type="OrthoDB" id="5978182at2759"/>
<dbReference type="PhylomeDB" id="B0JYX6"/>
<dbReference type="TreeFam" id="TF328597"/>
<dbReference type="Proteomes" id="UP000008143">
    <property type="component" value="Chromosome 7"/>
</dbReference>
<dbReference type="Bgee" id="ENSXETG00000027473">
    <property type="expression patterns" value="Expressed in egg cell and 12 other cell types or tissues"/>
</dbReference>
<dbReference type="GO" id="GO:0005929">
    <property type="term" value="C:cilium"/>
    <property type="evidence" value="ECO:0007669"/>
    <property type="project" value="UniProtKB-SubCell"/>
</dbReference>
<dbReference type="GO" id="GO:0016020">
    <property type="term" value="C:membrane"/>
    <property type="evidence" value="ECO:0007669"/>
    <property type="project" value="UniProtKB-SubCell"/>
</dbReference>
<dbReference type="InterPro" id="IPR026771">
    <property type="entry name" value="Tmem218"/>
</dbReference>
<dbReference type="PANTHER" id="PTHR31622">
    <property type="entry name" value="TRANSMEMBRANE PROTEIN 218"/>
    <property type="match status" value="1"/>
</dbReference>
<dbReference type="PANTHER" id="PTHR31622:SF1">
    <property type="entry name" value="TRANSMEMBRANE PROTEIN 218"/>
    <property type="match status" value="1"/>
</dbReference>
<comment type="function">
    <text evidence="1">May be involved in ciliary biogenesis or function.</text>
</comment>
<comment type="subcellular location">
    <subcellularLocation>
        <location evidence="3">Membrane</location>
        <topology evidence="3">Multi-pass membrane protein</topology>
    </subcellularLocation>
    <subcellularLocation>
        <location evidence="1">Cell projection</location>
        <location evidence="1">Cilium</location>
    </subcellularLocation>
    <text evidence="1">Localizes at the transition zone, a region between the basal body and the ciliary axoneme.</text>
</comment>
<comment type="similarity">
    <text evidence="3">Belongs to the TMEM218 family.</text>
</comment>
<feature type="chain" id="PRO_0000359899" description="Transmembrane protein 218">
    <location>
        <begin position="1"/>
        <end position="115"/>
    </location>
</feature>
<feature type="transmembrane region" description="Helical" evidence="2">
    <location>
        <begin position="5"/>
        <end position="25"/>
    </location>
</feature>
<feature type="transmembrane region" description="Helical" evidence="2">
    <location>
        <begin position="38"/>
        <end position="58"/>
    </location>
</feature>
<feature type="transmembrane region" description="Helical" evidence="2">
    <location>
        <begin position="81"/>
        <end position="101"/>
    </location>
</feature>
<accession>B0JYX6</accession>
<reference key="1">
    <citation type="submission" date="2008-02" db="EMBL/GenBank/DDBJ databases">
        <authorList>
            <consortium name="NIH - Xenopus Gene Collection (XGC) project"/>
        </authorList>
    </citation>
    <scope>NUCLEOTIDE SEQUENCE [LARGE SCALE MRNA]</scope>
    <source>
        <tissue>Embryo</tissue>
    </source>
</reference>
<protein>
    <recommendedName>
        <fullName>Transmembrane protein 218</fullName>
    </recommendedName>
</protein>